<keyword id="KW-0050">Antiport</keyword>
<keyword id="KW-0997">Cell inner membrane</keyword>
<keyword id="KW-1003">Cell membrane</keyword>
<keyword id="KW-0472">Membrane</keyword>
<keyword id="KW-1185">Reference proteome</keyword>
<keyword id="KW-0812">Transmembrane</keyword>
<keyword id="KW-1133">Transmembrane helix</keyword>
<keyword id="KW-0813">Transport</keyword>
<comment type="function">
    <text evidence="1">Responsible for the transport of C4-dicarboxylates during anaerobic growth. Catalyzes the uptake of fumarate coupled to the export of succinate.</text>
</comment>
<comment type="catalytic activity">
    <reaction evidence="1">
        <text>fumarate(in) + succinate(out) = fumarate(out) + succinate(in)</text>
        <dbReference type="Rhea" id="RHEA:29323"/>
        <dbReference type="ChEBI" id="CHEBI:29806"/>
        <dbReference type="ChEBI" id="CHEBI:30031"/>
    </reaction>
    <physiologicalReaction direction="right-to-left" evidence="1">
        <dbReference type="Rhea" id="RHEA:29325"/>
    </physiologicalReaction>
</comment>
<comment type="subcellular location">
    <subcellularLocation>
        <location evidence="1">Cell inner membrane</location>
        <topology evidence="2">Multi-pass membrane protein</topology>
    </subcellularLocation>
</comment>
<comment type="similarity">
    <text evidence="3">Belongs to the DcuC/DcuD transporter (TC 2.A.61) family.</text>
</comment>
<gene>
    <name type="primary">dcuC</name>
    <name type="ordered locus">VC_A0665</name>
</gene>
<proteinExistence type="inferred from homology"/>
<name>DCUC_VIBCH</name>
<organism>
    <name type="scientific">Vibrio cholerae serotype O1 (strain ATCC 39315 / El Tor Inaba N16961)</name>
    <dbReference type="NCBI Taxonomy" id="243277"/>
    <lineage>
        <taxon>Bacteria</taxon>
        <taxon>Pseudomonadati</taxon>
        <taxon>Pseudomonadota</taxon>
        <taxon>Gammaproteobacteria</taxon>
        <taxon>Vibrionales</taxon>
        <taxon>Vibrionaceae</taxon>
        <taxon>Vibrio</taxon>
    </lineage>
</organism>
<reference key="1">
    <citation type="journal article" date="2000" name="Nature">
        <title>DNA sequence of both chromosomes of the cholera pathogen Vibrio cholerae.</title>
        <authorList>
            <person name="Heidelberg J.F."/>
            <person name="Eisen J.A."/>
            <person name="Nelson W.C."/>
            <person name="Clayton R.A."/>
            <person name="Gwinn M.L."/>
            <person name="Dodson R.J."/>
            <person name="Haft D.H."/>
            <person name="Hickey E.K."/>
            <person name="Peterson J.D."/>
            <person name="Umayam L.A."/>
            <person name="Gill S.R."/>
            <person name="Nelson K.E."/>
            <person name="Read T.D."/>
            <person name="Tettelin H."/>
            <person name="Richardson D.L."/>
            <person name="Ermolaeva M.D."/>
            <person name="Vamathevan J.J."/>
            <person name="Bass S."/>
            <person name="Qin H."/>
            <person name="Dragoi I."/>
            <person name="Sellers P."/>
            <person name="McDonald L.A."/>
            <person name="Utterback T.R."/>
            <person name="Fleischmann R.D."/>
            <person name="Nierman W.C."/>
            <person name="White O."/>
            <person name="Salzberg S.L."/>
            <person name="Smith H.O."/>
            <person name="Colwell R.R."/>
            <person name="Mekalanos J.J."/>
            <person name="Venter J.C."/>
            <person name="Fraser C.M."/>
        </authorList>
    </citation>
    <scope>NUCLEOTIDE SEQUENCE [LARGE SCALE GENOMIC DNA]</scope>
    <source>
        <strain>ATCC 39315 / El Tor Inaba N16961</strain>
    </source>
</reference>
<sequence>MEIAMLELLIGLVVTFAVGYFIVKGYKPAGILLTAGILLLILTGILGHKVLPGQMESTGNLLTDAMEYVKYMLQNRGGGLGMQIMLLCGFASYMTHIGANNVVVKQFSKPLSFIKSPYILLVAAYLVACLMSLAVSSATGLGVLLMATLFPMMTAMGISRPAAVAVCASPAAIILSPTSGDVVIAAEKSGLPLHVFAVETVLPVSICAIIVMAAAAYFWNQYLDKKDNTPMEKVDLSEMEVKSPAYYAVLPFLPIIGVFVFNGETLPGITLDIYTIVVLSIFIGVLVDYITKRFNGKQTLEDLEACYEGMADAFKGVVMLLVAAGVFAQGLMSIGAIDNLLHLAEVAGAGGIALMLILTGLTVAAAIATGSGNAPFYAFVELAPSLAAKMGLNPAFLIIPMLQASNLGRTISPVSGVVVATAGMGKISPFEVVKRTSVPVLLGLVTVIIGTMVLVPMHA</sequence>
<protein>
    <recommendedName>
        <fullName evidence="1">Probable anaerobic C4-dicarboxylate transporter DcuC</fullName>
    </recommendedName>
</protein>
<feature type="chain" id="PRO_0000201631" description="Probable anaerobic C4-dicarboxylate transporter DcuC">
    <location>
        <begin position="1"/>
        <end position="459"/>
    </location>
</feature>
<feature type="transmembrane region" description="Helical" evidence="2">
    <location>
        <begin position="3"/>
        <end position="23"/>
    </location>
</feature>
<feature type="transmembrane region" description="Helical" evidence="2">
    <location>
        <begin position="28"/>
        <end position="48"/>
    </location>
</feature>
<feature type="transmembrane region" description="Helical" evidence="2">
    <location>
        <begin position="79"/>
        <end position="99"/>
    </location>
</feature>
<feature type="transmembrane region" description="Helical" evidence="2">
    <location>
        <begin position="118"/>
        <end position="138"/>
    </location>
</feature>
<feature type="transmembrane region" description="Helical" evidence="2">
    <location>
        <begin position="139"/>
        <end position="159"/>
    </location>
</feature>
<feature type="transmembrane region" description="Helical" evidence="2">
    <location>
        <begin position="164"/>
        <end position="184"/>
    </location>
</feature>
<feature type="transmembrane region" description="Helical" evidence="2">
    <location>
        <begin position="195"/>
        <end position="215"/>
    </location>
</feature>
<feature type="transmembrane region" description="Helical" evidence="2">
    <location>
        <begin position="243"/>
        <end position="263"/>
    </location>
</feature>
<feature type="transmembrane region" description="Helical" evidence="2">
    <location>
        <begin position="267"/>
        <end position="287"/>
    </location>
</feature>
<feature type="transmembrane region" description="Helical" evidence="2">
    <location>
        <begin position="317"/>
        <end position="337"/>
    </location>
</feature>
<feature type="transmembrane region" description="Helical" evidence="2">
    <location>
        <begin position="347"/>
        <end position="367"/>
    </location>
</feature>
<feature type="transmembrane region" description="Helical" evidence="2">
    <location>
        <begin position="437"/>
        <end position="457"/>
    </location>
</feature>
<dbReference type="EMBL" id="AE003853">
    <property type="protein sequence ID" value="AAF96566.1"/>
    <property type="molecule type" value="Genomic_DNA"/>
</dbReference>
<dbReference type="PIR" id="G82431">
    <property type="entry name" value="G82431"/>
</dbReference>
<dbReference type="RefSeq" id="NP_233054.1">
    <property type="nucleotide sequence ID" value="NC_002506.1"/>
</dbReference>
<dbReference type="SMR" id="Q9KLS6"/>
<dbReference type="STRING" id="243277.VC_A0665"/>
<dbReference type="DNASU" id="2612512"/>
<dbReference type="EnsemblBacteria" id="AAF96566">
    <property type="protein sequence ID" value="AAF96566"/>
    <property type="gene ID" value="VC_A0665"/>
</dbReference>
<dbReference type="KEGG" id="vch:VC_A0665"/>
<dbReference type="PATRIC" id="fig|243277.26.peg.3291"/>
<dbReference type="eggNOG" id="COG3069">
    <property type="taxonomic scope" value="Bacteria"/>
</dbReference>
<dbReference type="HOGENOM" id="CLU_030262_3_2_6"/>
<dbReference type="Proteomes" id="UP000000584">
    <property type="component" value="Chromosome 2"/>
</dbReference>
<dbReference type="GO" id="GO:0005886">
    <property type="term" value="C:plasma membrane"/>
    <property type="evidence" value="ECO:0007669"/>
    <property type="project" value="UniProtKB-SubCell"/>
</dbReference>
<dbReference type="GO" id="GO:0015297">
    <property type="term" value="F:antiporter activity"/>
    <property type="evidence" value="ECO:0007669"/>
    <property type="project" value="UniProtKB-KW"/>
</dbReference>
<dbReference type="GO" id="GO:0015556">
    <property type="term" value="F:C4-dicarboxylate transmembrane transporter activity"/>
    <property type="evidence" value="ECO:0007669"/>
    <property type="project" value="InterPro"/>
</dbReference>
<dbReference type="GO" id="GO:0015740">
    <property type="term" value="P:C4-dicarboxylate transport"/>
    <property type="evidence" value="ECO:0000318"/>
    <property type="project" value="GO_Central"/>
</dbReference>
<dbReference type="InterPro" id="IPR004669">
    <property type="entry name" value="C4_dicarb_anaerob_car"/>
</dbReference>
<dbReference type="InterPro" id="IPR018385">
    <property type="entry name" value="C4_dicarb_anaerob_car-like"/>
</dbReference>
<dbReference type="NCBIfam" id="TIGR00771">
    <property type="entry name" value="DcuC"/>
    <property type="match status" value="1"/>
</dbReference>
<dbReference type="NCBIfam" id="NF037994">
    <property type="entry name" value="DcuC_1"/>
    <property type="match status" value="1"/>
</dbReference>
<dbReference type="NCBIfam" id="NF007937">
    <property type="entry name" value="PRK10654.1"/>
    <property type="match status" value="1"/>
</dbReference>
<dbReference type="PANTHER" id="PTHR42002">
    <property type="entry name" value="ANAEROBIC C4-DICARBOXYLATE TRANSPORTER DCUC-RELATED"/>
    <property type="match status" value="1"/>
</dbReference>
<dbReference type="PANTHER" id="PTHR42002:SF2">
    <property type="entry name" value="ANAEROBIC C4-DICARBOXYLATE TRANSPORTER DCUC-RELATED"/>
    <property type="match status" value="1"/>
</dbReference>
<dbReference type="Pfam" id="PF03606">
    <property type="entry name" value="DcuC"/>
    <property type="match status" value="1"/>
</dbReference>
<evidence type="ECO:0000250" key="1">
    <source>
        <dbReference type="UniProtKB" id="P0ABP3"/>
    </source>
</evidence>
<evidence type="ECO:0000255" key="2"/>
<evidence type="ECO:0000305" key="3"/>
<accession>Q9KLS6</accession>